<feature type="chain" id="PRO_0000243650" description="Large ribosomal subunit protein bL20">
    <location>
        <begin position="1"/>
        <end position="118"/>
    </location>
</feature>
<dbReference type="EMBL" id="CP000117">
    <property type="protein sequence ID" value="ABA23055.1"/>
    <property type="molecule type" value="Genomic_DNA"/>
</dbReference>
<dbReference type="SMR" id="Q3M7I1"/>
<dbReference type="STRING" id="240292.Ava_3448"/>
<dbReference type="KEGG" id="ava:Ava_3448"/>
<dbReference type="eggNOG" id="COG0292">
    <property type="taxonomic scope" value="Bacteria"/>
</dbReference>
<dbReference type="HOGENOM" id="CLU_123265_0_1_3"/>
<dbReference type="Proteomes" id="UP000002533">
    <property type="component" value="Chromosome"/>
</dbReference>
<dbReference type="GO" id="GO:1990904">
    <property type="term" value="C:ribonucleoprotein complex"/>
    <property type="evidence" value="ECO:0007669"/>
    <property type="project" value="UniProtKB-KW"/>
</dbReference>
<dbReference type="GO" id="GO:0005840">
    <property type="term" value="C:ribosome"/>
    <property type="evidence" value="ECO:0007669"/>
    <property type="project" value="UniProtKB-KW"/>
</dbReference>
<dbReference type="GO" id="GO:0019843">
    <property type="term" value="F:rRNA binding"/>
    <property type="evidence" value="ECO:0007669"/>
    <property type="project" value="UniProtKB-UniRule"/>
</dbReference>
<dbReference type="GO" id="GO:0003735">
    <property type="term" value="F:structural constituent of ribosome"/>
    <property type="evidence" value="ECO:0007669"/>
    <property type="project" value="InterPro"/>
</dbReference>
<dbReference type="GO" id="GO:0000027">
    <property type="term" value="P:ribosomal large subunit assembly"/>
    <property type="evidence" value="ECO:0007669"/>
    <property type="project" value="UniProtKB-UniRule"/>
</dbReference>
<dbReference type="GO" id="GO:0006412">
    <property type="term" value="P:translation"/>
    <property type="evidence" value="ECO:0007669"/>
    <property type="project" value="InterPro"/>
</dbReference>
<dbReference type="CDD" id="cd07026">
    <property type="entry name" value="Ribosomal_L20"/>
    <property type="match status" value="1"/>
</dbReference>
<dbReference type="FunFam" id="1.10.1900.20:FF:000001">
    <property type="entry name" value="50S ribosomal protein L20"/>
    <property type="match status" value="1"/>
</dbReference>
<dbReference type="Gene3D" id="6.10.160.10">
    <property type="match status" value="1"/>
</dbReference>
<dbReference type="Gene3D" id="1.10.1900.20">
    <property type="entry name" value="Ribosomal protein L20"/>
    <property type="match status" value="1"/>
</dbReference>
<dbReference type="HAMAP" id="MF_00382">
    <property type="entry name" value="Ribosomal_bL20"/>
    <property type="match status" value="1"/>
</dbReference>
<dbReference type="InterPro" id="IPR005813">
    <property type="entry name" value="Ribosomal_bL20"/>
</dbReference>
<dbReference type="InterPro" id="IPR049946">
    <property type="entry name" value="RIBOSOMAL_L20_CS"/>
</dbReference>
<dbReference type="InterPro" id="IPR035566">
    <property type="entry name" value="Ribosomal_protein_bL20_C"/>
</dbReference>
<dbReference type="NCBIfam" id="TIGR01032">
    <property type="entry name" value="rplT_bact"/>
    <property type="match status" value="1"/>
</dbReference>
<dbReference type="PANTHER" id="PTHR10986">
    <property type="entry name" value="39S RIBOSOMAL PROTEIN L20"/>
    <property type="match status" value="1"/>
</dbReference>
<dbReference type="Pfam" id="PF00453">
    <property type="entry name" value="Ribosomal_L20"/>
    <property type="match status" value="1"/>
</dbReference>
<dbReference type="PRINTS" id="PR00062">
    <property type="entry name" value="RIBOSOMALL20"/>
</dbReference>
<dbReference type="SUPFAM" id="SSF74731">
    <property type="entry name" value="Ribosomal protein L20"/>
    <property type="match status" value="1"/>
</dbReference>
<dbReference type="PROSITE" id="PS00937">
    <property type="entry name" value="RIBOSOMAL_L20"/>
    <property type="match status" value="1"/>
</dbReference>
<name>RL20_TRIV2</name>
<keyword id="KW-0687">Ribonucleoprotein</keyword>
<keyword id="KW-0689">Ribosomal protein</keyword>
<keyword id="KW-0694">RNA-binding</keyword>
<keyword id="KW-0699">rRNA-binding</keyword>
<evidence type="ECO:0000255" key="1">
    <source>
        <dbReference type="HAMAP-Rule" id="MF_00382"/>
    </source>
</evidence>
<evidence type="ECO:0000305" key="2"/>
<proteinExistence type="inferred from homology"/>
<gene>
    <name evidence="1" type="primary">rplT</name>
    <name evidence="1" type="synonym">rpl20</name>
    <name type="ordered locus">Ava_3448</name>
</gene>
<organism>
    <name type="scientific">Trichormus variabilis (strain ATCC 29413 / PCC 7937)</name>
    <name type="common">Anabaena variabilis</name>
    <dbReference type="NCBI Taxonomy" id="240292"/>
    <lineage>
        <taxon>Bacteria</taxon>
        <taxon>Bacillati</taxon>
        <taxon>Cyanobacteriota</taxon>
        <taxon>Cyanophyceae</taxon>
        <taxon>Nostocales</taxon>
        <taxon>Nostocaceae</taxon>
        <taxon>Trichormus</taxon>
    </lineage>
</organism>
<sequence length="118" mass="13515">MTRVKRGNVARKRRNKILKLAKGFRGSHSTLFRTANQQVMKALRSAYRDRKKKKRDFRRLWITRINAAARQHGLSYSQLIGNLKKADIQLNRKMLAQLAVLDPASFGKVAELAIQAKG</sequence>
<accession>Q3M7I1</accession>
<comment type="function">
    <text evidence="1">Binds directly to 23S ribosomal RNA and is necessary for the in vitro assembly process of the 50S ribosomal subunit. It is not involved in the protein synthesizing functions of that subunit.</text>
</comment>
<comment type="similarity">
    <text evidence="1">Belongs to the bacterial ribosomal protein bL20 family.</text>
</comment>
<reference key="1">
    <citation type="journal article" date="2014" name="Stand. Genomic Sci.">
        <title>Complete genome sequence of Anabaena variabilis ATCC 29413.</title>
        <authorList>
            <person name="Thiel T."/>
            <person name="Pratte B.S."/>
            <person name="Zhong J."/>
            <person name="Goodwin L."/>
            <person name="Copeland A."/>
            <person name="Lucas S."/>
            <person name="Han C."/>
            <person name="Pitluck S."/>
            <person name="Land M.L."/>
            <person name="Kyrpides N.C."/>
            <person name="Woyke T."/>
        </authorList>
    </citation>
    <scope>NUCLEOTIDE SEQUENCE [LARGE SCALE GENOMIC DNA]</scope>
    <source>
        <strain>ATCC 29413 / PCC 7937</strain>
    </source>
</reference>
<protein>
    <recommendedName>
        <fullName evidence="1">Large ribosomal subunit protein bL20</fullName>
    </recommendedName>
    <alternativeName>
        <fullName evidence="2">50S ribosomal protein L20</fullName>
    </alternativeName>
</protein>